<keyword id="KW-0002">3D-structure</keyword>
<keyword id="KW-1035">Host cytoplasm</keyword>
<keyword id="KW-0945">Host-virus interaction</keyword>
<keyword id="KW-1090">Inhibition of host innate immune response by virus</keyword>
<keyword id="KW-0694">RNA-binding</keyword>
<keyword id="KW-0941">Suppressor of RNA silencing</keyword>
<keyword id="KW-0899">Viral immunoevasion</keyword>
<protein>
    <recommendedName>
        <fullName>Suppressor of RNA silencing p3</fullName>
    </recommendedName>
    <alternativeName>
        <fullName>Protein NS3</fullName>
    </alternativeName>
    <alternativeName>
        <fullName>Protein p3</fullName>
    </alternativeName>
</protein>
<proteinExistence type="evidence at protein level"/>
<name>VSR_RHBVC</name>
<reference key="1">
    <citation type="journal article" date="1994" name="J. Gen. Virol.">
        <title>Sequence analysis of rice hoja blanca virus RNA 3.</title>
        <authorList>
            <person name="de Miranda J."/>
            <person name="Hernandez M."/>
            <person name="Hull R."/>
            <person name="Espinoza A.M."/>
        </authorList>
    </citation>
    <scope>NUCLEOTIDE SEQUENCE [GENOMIC RNA]</scope>
</reference>
<reference key="2">
    <citation type="journal article" date="2003" name="J. Virol.">
        <title>Negative-strand tospoviruses and tenuiviruses carry a gene for a suppressor of gene silencing at analogous genomic positions.</title>
        <authorList>
            <person name="Bucher E."/>
            <person name="Sijen T."/>
            <person name="De Haan P."/>
            <person name="Goldbach R."/>
            <person name="Prins M."/>
        </authorList>
    </citation>
    <scope>FUNCTION</scope>
</reference>
<accession>Q67897</accession>
<gene>
    <name type="ORF">p3</name>
</gene>
<organismHost>
    <name type="scientific">Oryza sativa</name>
    <name type="common">Rice</name>
    <dbReference type="NCBI Taxonomy" id="4530"/>
</organismHost>
<organismHost>
    <name type="scientific">Oryza sp.</name>
    <dbReference type="NCBI Taxonomy" id="52841"/>
</organismHost>
<sequence length="203" mass="23204">MNVSLYYSGTPVSSHSLLSKNGLSNIVLTCKDLPIPIDLLSLFFDILNERHPSFDEHMFLQMIRKPDDPENLSVFLKSAIWMLSHKRDLPGHYRLPLTCLVSTYSEYFVELKPRQPSTKCWFCKIAKDGLPFRVEGVHGFPSEAELYIVPSKEHAIESFEVLSGKKLYRSPSKKKHGYLIASNKPPLTSKYVEYDPSKPDTKP</sequence>
<dbReference type="EMBL" id="L07940">
    <property type="protein sequence ID" value="AAA53423.1"/>
    <property type="molecule type" value="Genomic_RNA"/>
</dbReference>
<dbReference type="PDB" id="3AJF">
    <property type="method" value="X-ray"/>
    <property type="resolution" value="2.00 A"/>
    <property type="chains" value="A/B/C/D=21-114"/>
</dbReference>
<dbReference type="PDBsum" id="3AJF"/>
<dbReference type="SMR" id="Q67897"/>
<dbReference type="BRENDA" id="3.6.4.13">
    <property type="organism ID" value="17130"/>
</dbReference>
<dbReference type="EvolutionaryTrace" id="Q67897"/>
<dbReference type="GO" id="GO:0030430">
    <property type="term" value="C:host cell cytoplasm"/>
    <property type="evidence" value="ECO:0007669"/>
    <property type="project" value="UniProtKB-SubCell"/>
</dbReference>
<dbReference type="GO" id="GO:0003723">
    <property type="term" value="F:RNA binding"/>
    <property type="evidence" value="ECO:0007669"/>
    <property type="project" value="UniProtKB-KW"/>
</dbReference>
<dbReference type="GO" id="GO:0052170">
    <property type="term" value="P:symbiont-mediated suppression of host innate immune response"/>
    <property type="evidence" value="ECO:0007669"/>
    <property type="project" value="UniProtKB-KW"/>
</dbReference>
<dbReference type="Gene3D" id="1.20.1440.190">
    <property type="entry name" value="Tenuivirus movement protein"/>
    <property type="match status" value="1"/>
</dbReference>
<dbReference type="InterPro" id="IPR007974">
    <property type="entry name" value="Tenui_movmnt_prot"/>
</dbReference>
<dbReference type="InterPro" id="IPR043105">
    <property type="entry name" value="Tenui_NS3"/>
</dbReference>
<dbReference type="Pfam" id="PF05310">
    <property type="entry name" value="Tenui_NS3"/>
    <property type="match status" value="1"/>
</dbReference>
<comment type="function">
    <text evidence="1 2">Acts as a suppressor of RNA-mediated gene silencing, also known as post-transcriptional gene silencing (PTGS), presumably through the binding of dsRNA.</text>
</comment>
<comment type="subunit">
    <text evidence="1">Homodimer.</text>
</comment>
<comment type="subcellular location">
    <subcellularLocation>
        <location evidence="1">Host cytoplasm</location>
    </subcellularLocation>
</comment>
<comment type="similarity">
    <text evidence="3">Belongs to the tenuiviruses p3 protein family.</text>
</comment>
<organism>
    <name type="scientific">Rice hoja blanca virus (strain cr)</name>
    <name type="common">RHBV</name>
    <name type="synonym">Rice hoja blanca virus (strain Costa Rica)</name>
    <dbReference type="NCBI Taxonomy" id="480611"/>
    <lineage>
        <taxon>Viruses</taxon>
        <taxon>Riboviria</taxon>
        <taxon>Orthornavirae</taxon>
        <taxon>Negarnaviricota</taxon>
        <taxon>Polyploviricotina</taxon>
        <taxon>Ellioviricetes</taxon>
        <taxon>Bunyavirales</taxon>
        <taxon>Phenuiviridae</taxon>
        <taxon>Tenuivirus</taxon>
        <taxon>Tenuivirus oryzalbae</taxon>
    </lineage>
</organism>
<evidence type="ECO:0000250" key="1"/>
<evidence type="ECO:0000269" key="2">
    <source>
    </source>
</evidence>
<evidence type="ECO:0000305" key="3"/>
<evidence type="ECO:0007829" key="4">
    <source>
        <dbReference type="PDB" id="3AJF"/>
    </source>
</evidence>
<feature type="chain" id="PRO_0000312157" description="Suppressor of RNA silencing p3">
    <location>
        <begin position="1"/>
        <end position="203"/>
    </location>
</feature>
<feature type="turn" evidence="4">
    <location>
        <begin position="23"/>
        <end position="25"/>
    </location>
</feature>
<feature type="helix" evidence="4">
    <location>
        <begin position="37"/>
        <end position="50"/>
    </location>
</feature>
<feature type="helix" evidence="4">
    <location>
        <begin position="56"/>
        <end position="64"/>
    </location>
</feature>
<feature type="helix" evidence="4">
    <location>
        <begin position="69"/>
        <end position="84"/>
    </location>
</feature>
<feature type="helix" evidence="4">
    <location>
        <begin position="91"/>
        <end position="93"/>
    </location>
</feature>
<feature type="helix" evidence="4">
    <location>
        <begin position="94"/>
        <end position="105"/>
    </location>
</feature>
<feature type="helix" evidence="4">
    <location>
        <begin position="106"/>
        <end position="109"/>
    </location>
</feature>